<reference key="1">
    <citation type="journal article" date="1994" name="Nature">
        <title>Complete DNA sequence of yeast chromosome XI.</title>
        <authorList>
            <person name="Dujon B."/>
            <person name="Alexandraki D."/>
            <person name="Andre B."/>
            <person name="Ansorge W."/>
            <person name="Baladron V."/>
            <person name="Ballesta J.P.G."/>
            <person name="Banrevi A."/>
            <person name="Bolle P.-A."/>
            <person name="Bolotin-Fukuhara M."/>
            <person name="Bossier P."/>
            <person name="Bou G."/>
            <person name="Boyer J."/>
            <person name="Buitrago M.J."/>
            <person name="Cheret G."/>
            <person name="Colleaux L."/>
            <person name="Daignan-Fornier B."/>
            <person name="del Rey F."/>
            <person name="Dion C."/>
            <person name="Domdey H."/>
            <person name="Duesterhoeft A."/>
            <person name="Duesterhus S."/>
            <person name="Entian K.-D."/>
            <person name="Erfle H."/>
            <person name="Esteban P.F."/>
            <person name="Feldmann H."/>
            <person name="Fernandes L."/>
            <person name="Fobo G.M."/>
            <person name="Fritz C."/>
            <person name="Fukuhara H."/>
            <person name="Gabel C."/>
            <person name="Gaillon L."/>
            <person name="Garcia-Cantalejo J.M."/>
            <person name="Garcia-Ramirez J.J."/>
            <person name="Gent M.E."/>
            <person name="Ghazvini M."/>
            <person name="Goffeau A."/>
            <person name="Gonzalez A."/>
            <person name="Grothues D."/>
            <person name="Guerreiro P."/>
            <person name="Hegemann J.H."/>
            <person name="Hewitt N."/>
            <person name="Hilger F."/>
            <person name="Hollenberg C.P."/>
            <person name="Horaitis O."/>
            <person name="Indge K.J."/>
            <person name="Jacquier A."/>
            <person name="James C.M."/>
            <person name="Jauniaux J.-C."/>
            <person name="Jimenez A."/>
            <person name="Keuchel H."/>
            <person name="Kirchrath L."/>
            <person name="Kleine K."/>
            <person name="Koetter P."/>
            <person name="Legrain P."/>
            <person name="Liebl S."/>
            <person name="Louis E.J."/>
            <person name="Maia e Silva A."/>
            <person name="Marck C."/>
            <person name="Monnier A.-L."/>
            <person name="Moestl D."/>
            <person name="Mueller S."/>
            <person name="Obermaier B."/>
            <person name="Oliver S.G."/>
            <person name="Pallier C."/>
            <person name="Pascolo S."/>
            <person name="Pfeiffer F."/>
            <person name="Philippsen P."/>
            <person name="Planta R.J."/>
            <person name="Pohl F.M."/>
            <person name="Pohl T.M."/>
            <person name="Poehlmann R."/>
            <person name="Portetelle D."/>
            <person name="Purnelle B."/>
            <person name="Puzos V."/>
            <person name="Ramezani Rad M."/>
            <person name="Rasmussen S.W."/>
            <person name="Remacha M.A."/>
            <person name="Revuelta J.L."/>
            <person name="Richard G.-F."/>
            <person name="Rieger M."/>
            <person name="Rodrigues-Pousada C."/>
            <person name="Rose M."/>
            <person name="Rupp T."/>
            <person name="Santos M.A."/>
            <person name="Schwager C."/>
            <person name="Sensen C."/>
            <person name="Skala J."/>
            <person name="Soares H."/>
            <person name="Sor F."/>
            <person name="Stegemann J."/>
            <person name="Tettelin H."/>
            <person name="Thierry A."/>
            <person name="Tzermia M."/>
            <person name="Urrestarazu L.A."/>
            <person name="van Dyck L."/>
            <person name="van Vliet-Reedijk J.C."/>
            <person name="Valens M."/>
            <person name="Vandenbol M."/>
            <person name="Vilela C."/>
            <person name="Vissers S."/>
            <person name="von Wettstein D."/>
            <person name="Voss H."/>
            <person name="Wiemann S."/>
            <person name="Xu G."/>
            <person name="Zimmermann J."/>
            <person name="Haasemann M."/>
            <person name="Becker I."/>
            <person name="Mewes H.-W."/>
        </authorList>
    </citation>
    <scope>NUCLEOTIDE SEQUENCE [LARGE SCALE GENOMIC DNA]</scope>
    <source>
        <strain>ATCC 204508 / S288c</strain>
    </source>
</reference>
<reference key="2">
    <citation type="journal article" date="2014" name="G3 (Bethesda)">
        <title>The reference genome sequence of Saccharomyces cerevisiae: Then and now.</title>
        <authorList>
            <person name="Engel S.R."/>
            <person name="Dietrich F.S."/>
            <person name="Fisk D.G."/>
            <person name="Binkley G."/>
            <person name="Balakrishnan R."/>
            <person name="Costanzo M.C."/>
            <person name="Dwight S.S."/>
            <person name="Hitz B.C."/>
            <person name="Karra K."/>
            <person name="Nash R.S."/>
            <person name="Weng S."/>
            <person name="Wong E.D."/>
            <person name="Lloyd P."/>
            <person name="Skrzypek M.S."/>
            <person name="Miyasato S.R."/>
            <person name="Simison M."/>
            <person name="Cherry J.M."/>
        </authorList>
    </citation>
    <scope>GENOME REANNOTATION</scope>
    <source>
        <strain>ATCC 204508 / S288c</strain>
    </source>
</reference>
<reference key="3">
    <citation type="journal article" date="2003" name="Genome Biol.">
        <title>Reinvestigation of the Saccharomyces cerevisiae genome annotation by comparison to the genome of a related fungus: Ashbya gossypii.</title>
        <authorList>
            <person name="Brachat S."/>
            <person name="Dietrich F.S."/>
            <person name="Voegeli S."/>
            <person name="Zhang Z."/>
            <person name="Stuart L."/>
            <person name="Lerch A."/>
            <person name="Gates K."/>
            <person name="Gaffney T.D."/>
            <person name="Philippsen P."/>
        </authorList>
    </citation>
    <scope>NUCLEOTIDE SEQUENCE [GENOMIC DNA] OF 194-253</scope>
    <source>
        <strain>ATCC 204511 / S288c / AB972</strain>
    </source>
</reference>
<reference key="4">
    <citation type="journal article" date="2003" name="Nature">
        <title>Sequencing and comparison of yeast species to identify genes and regulatory elements.</title>
        <authorList>
            <person name="Kellis M."/>
            <person name="Patterson N."/>
            <person name="Endrizzi M."/>
            <person name="Birren B.W."/>
            <person name="Lander E.S."/>
        </authorList>
    </citation>
    <scope>IDENTIFICATION OF PROBABLE INITIATION SITE</scope>
</reference>
<reference key="5">
    <citation type="journal article" date="2003" name="Science">
        <title>Finding functional features in Saccharomyces genomes by phylogenetic footprinting.</title>
        <authorList>
            <person name="Cliften P.F."/>
            <person name="Sudarsanam P."/>
            <person name="Desikan A."/>
            <person name="Fulton L."/>
            <person name="Fulton B."/>
            <person name="Majors J."/>
            <person name="Waterston R."/>
            <person name="Cohen B.A."/>
            <person name="Johnston M."/>
        </authorList>
    </citation>
    <scope>IDENTIFICATION OF PROBABLE INITIATION SITE</scope>
</reference>
<reference key="6">
    <citation type="journal article" date="2009" name="Science">
        <title>Comprehensive characterization of genes required for protein folding in the endoplasmic reticulum.</title>
        <authorList>
            <person name="Jonikas M.C."/>
            <person name="Collins S.R."/>
            <person name="Denic V."/>
            <person name="Oh E."/>
            <person name="Quan E.M."/>
            <person name="Schmid V."/>
            <person name="Weibezahn J."/>
            <person name="Schwappach B."/>
            <person name="Walter P."/>
            <person name="Weissman J.S."/>
            <person name="Schuldiner M."/>
        </authorList>
    </citation>
    <scope>IDENTIFICATION IN EMC COMPLEX</scope>
</reference>
<reference key="7">
    <citation type="journal article" date="2018" name="Elife">
        <title>The ER membrane protein complex interacts cotranslationally to enable biogenesis of multipass membrane proteins.</title>
        <authorList>
            <person name="Shurtleff M.J."/>
            <person name="Itzhak D.N."/>
            <person name="Hussmann J.A."/>
            <person name="Schirle Oakdale N.T."/>
            <person name="Costa E.A."/>
            <person name="Jonikas M."/>
            <person name="Weibezahn J."/>
            <person name="Popova K.D."/>
            <person name="Jan C.H."/>
            <person name="Sinitcyn P."/>
            <person name="Vembar S.S."/>
            <person name="Hernandez H."/>
            <person name="Cox J."/>
            <person name="Burlingame A.L."/>
            <person name="Brodsky J.L."/>
            <person name="Frost A."/>
            <person name="Borner G.H."/>
            <person name="Weissman J.S."/>
        </authorList>
    </citation>
    <scope>FUNCTION</scope>
    <scope>SUBUNIT</scope>
    <scope>SUBCELLULAR LOCATION</scope>
</reference>
<gene>
    <name type="primary">EMC3</name>
    <name type="synonym">AIM27</name>
    <name type="ordered locus">YKL207W</name>
</gene>
<organism>
    <name type="scientific">Saccharomyces cerevisiae (strain ATCC 204508 / S288c)</name>
    <name type="common">Baker's yeast</name>
    <dbReference type="NCBI Taxonomy" id="559292"/>
    <lineage>
        <taxon>Eukaryota</taxon>
        <taxon>Fungi</taxon>
        <taxon>Dikarya</taxon>
        <taxon>Ascomycota</taxon>
        <taxon>Saccharomycotina</taxon>
        <taxon>Saccharomycetes</taxon>
        <taxon>Saccharomycetales</taxon>
        <taxon>Saccharomycetaceae</taxon>
        <taxon>Saccharomyces</taxon>
    </lineage>
</organism>
<comment type="function">
    <text evidence="1 4">Part of the endoplasmic reticulum membrane protein complex (EMC) that enables the energy-independent insertion into endoplasmic reticulum membranes of newly synthesized membrane proteins (PubMed:29809151). Preferentially accommodates proteins with transmembrane domains that are weakly hydrophobic or contain destabilizing features such as charged and aromatic residues (PubMed:29809151). Involved in the cotranslational insertion of multi-pass membrane proteins in which stop-transfer membrane-anchor sequences become ER membrane spanning helices (PubMed:29809151). It is also required for the post-translational insertion of tail-anchored/TA proteins in endoplasmic reticulum membranes. By mediating the proper cotranslational insertion of N-terminal transmembrane domains in an N-exo topology, with translocated N-terminus in the lumen of the ER, controls the topology of multi-pass membrane proteins (By similarity).</text>
</comment>
<comment type="subunit">
    <text evidence="3 4">Component of the ER membrane protein complex (EMC), which is composed of EMC1, EMC2, EMC3, EMC4, EMC5 and EMC6.</text>
</comment>
<comment type="subcellular location">
    <subcellularLocation>
        <location evidence="6">Endoplasmic reticulum membrane</location>
        <topology evidence="1">Multi-pass membrane protein</topology>
    </subcellularLocation>
</comment>
<comment type="similarity">
    <text evidence="5">Belongs to the EMC3 family.</text>
</comment>
<comment type="sequence caution" evidence="5">
    <conflict type="erroneous initiation">
        <sequence resource="EMBL-CDS" id="CAA82052"/>
    </conflict>
    <text>Extended N-terminus.</text>
</comment>
<comment type="sequence caution" evidence="5">
    <conflict type="frameshift">
        <sequence resource="EMBL-CDS" id="CAA82052"/>
    </conflict>
</comment>
<dbReference type="EMBL" id="Z28207">
    <property type="protein sequence ID" value="CAA82052.1"/>
    <property type="status" value="ALT_SEQ"/>
    <property type="molecule type" value="Genomic_DNA"/>
</dbReference>
<dbReference type="EMBL" id="AY260882">
    <property type="protein sequence ID" value="AAP21750.1"/>
    <property type="molecule type" value="Genomic_DNA"/>
</dbReference>
<dbReference type="EMBL" id="BK006944">
    <property type="protein sequence ID" value="DAA08962.1"/>
    <property type="molecule type" value="Genomic_DNA"/>
</dbReference>
<dbReference type="PIR" id="S38045">
    <property type="entry name" value="S38045"/>
</dbReference>
<dbReference type="RefSeq" id="NP_012715.3">
    <property type="nucleotide sequence ID" value="NM_001179772.1"/>
</dbReference>
<dbReference type="PDB" id="6WB9">
    <property type="method" value="EM"/>
    <property type="resolution" value="3.00 A"/>
    <property type="chains" value="3=1-253"/>
</dbReference>
<dbReference type="PDB" id="7KRA">
    <property type="method" value="EM"/>
    <property type="resolution" value="3.20 A"/>
    <property type="chains" value="C=1-253"/>
</dbReference>
<dbReference type="PDB" id="7KTX">
    <property type="method" value="EM"/>
    <property type="resolution" value="4.30 A"/>
    <property type="chains" value="C=1-253"/>
</dbReference>
<dbReference type="PDBsum" id="6WB9"/>
<dbReference type="PDBsum" id="7KRA"/>
<dbReference type="PDBsum" id="7KTX"/>
<dbReference type="EMDB" id="EMD-21587"/>
<dbReference type="EMDB" id="EMD-23003"/>
<dbReference type="EMDB" id="EMD-23033"/>
<dbReference type="SMR" id="P36039"/>
<dbReference type="BioGRID" id="33916">
    <property type="interactions" value="136"/>
</dbReference>
<dbReference type="ComplexPortal" id="CPX-307">
    <property type="entry name" value="Endoplasmic Reticulum Membrane Complex"/>
</dbReference>
<dbReference type="DIP" id="DIP-8136N"/>
<dbReference type="FunCoup" id="P36039">
    <property type="interactions" value="485"/>
</dbReference>
<dbReference type="IntAct" id="P36039">
    <property type="interactions" value="10"/>
</dbReference>
<dbReference type="STRING" id="4932.YKL207W"/>
<dbReference type="TCDB" id="3.A.27.1.2">
    <property type="family name" value="the endoplasmic reticulum membrane protein insertion complex (emc) family"/>
</dbReference>
<dbReference type="PaxDb" id="4932-YKL207W"/>
<dbReference type="PeptideAtlas" id="P36039"/>
<dbReference type="EnsemblFungi" id="YKL207W_mRNA">
    <property type="protein sequence ID" value="YKL207W"/>
    <property type="gene ID" value="YKL207W"/>
</dbReference>
<dbReference type="GeneID" id="853628"/>
<dbReference type="KEGG" id="sce:YKL207W"/>
<dbReference type="AGR" id="SGD:S000001690"/>
<dbReference type="SGD" id="S000001690">
    <property type="gene designation" value="EMC3"/>
</dbReference>
<dbReference type="VEuPathDB" id="FungiDB:YKL207W"/>
<dbReference type="eggNOG" id="KOG3188">
    <property type="taxonomic scope" value="Eukaryota"/>
</dbReference>
<dbReference type="GeneTree" id="ENSGT00390000005780"/>
<dbReference type="HOGENOM" id="CLU_060791_0_0_1"/>
<dbReference type="InParanoid" id="P36039"/>
<dbReference type="OMA" id="KDMDPRW"/>
<dbReference type="OrthoDB" id="6745403at2759"/>
<dbReference type="BioCyc" id="YEAST:G3O-31966-MONOMER"/>
<dbReference type="BioGRID-ORCS" id="853628">
    <property type="hits" value="0 hits in 10 CRISPR screens"/>
</dbReference>
<dbReference type="PRO" id="PR:P36039"/>
<dbReference type="Proteomes" id="UP000002311">
    <property type="component" value="Chromosome XI"/>
</dbReference>
<dbReference type="RNAct" id="P36039">
    <property type="molecule type" value="protein"/>
</dbReference>
<dbReference type="GO" id="GO:0072546">
    <property type="term" value="C:EMC complex"/>
    <property type="evidence" value="ECO:0000314"/>
    <property type="project" value="UniProtKB"/>
</dbReference>
<dbReference type="GO" id="GO:0051087">
    <property type="term" value="F:protein-folding chaperone binding"/>
    <property type="evidence" value="ECO:0000314"/>
    <property type="project" value="UniProtKB"/>
</dbReference>
<dbReference type="GO" id="GO:0006644">
    <property type="term" value="P:phospholipid metabolic process"/>
    <property type="evidence" value="ECO:0000314"/>
    <property type="project" value="ComplexPortal"/>
</dbReference>
<dbReference type="GO" id="GO:0015914">
    <property type="term" value="P:phospholipid transport"/>
    <property type="evidence" value="ECO:0000315"/>
    <property type="project" value="ComplexPortal"/>
</dbReference>
<dbReference type="GO" id="GO:0034975">
    <property type="term" value="P:protein folding in endoplasmic reticulum"/>
    <property type="evidence" value="ECO:0007003"/>
    <property type="project" value="SGD"/>
</dbReference>
<dbReference type="GO" id="GO:0045050">
    <property type="term" value="P:protein insertion into ER membrane by stop-transfer membrane-anchor sequence"/>
    <property type="evidence" value="ECO:0000315"/>
    <property type="project" value="UniProtKB"/>
</dbReference>
<dbReference type="InterPro" id="IPR008568">
    <property type="entry name" value="EMC3"/>
</dbReference>
<dbReference type="InterPro" id="IPR002809">
    <property type="entry name" value="EMC3/TMCO1"/>
</dbReference>
<dbReference type="PANTHER" id="PTHR13116">
    <property type="entry name" value="ER MEMBRANE PROTEIN COMPLEX SUBUNIT 3"/>
    <property type="match status" value="1"/>
</dbReference>
<dbReference type="PANTHER" id="PTHR13116:SF5">
    <property type="entry name" value="ER MEMBRANE PROTEIN COMPLEX SUBUNIT 3"/>
    <property type="match status" value="1"/>
</dbReference>
<dbReference type="Pfam" id="PF01956">
    <property type="entry name" value="EMC3_TMCO1"/>
    <property type="match status" value="1"/>
</dbReference>
<dbReference type="PIRSF" id="PIRSF010045">
    <property type="entry name" value="DUF850_TM_euk"/>
    <property type="match status" value="1"/>
</dbReference>
<dbReference type="SMART" id="SM01415">
    <property type="entry name" value="DUF106"/>
    <property type="match status" value="1"/>
</dbReference>
<protein>
    <recommendedName>
        <fullName>ER membrane protein complex subunit 3</fullName>
    </recommendedName>
    <alternativeName>
        <fullName>Altered inheritance rate of mitochondria protein 27</fullName>
    </alternativeName>
</protein>
<evidence type="ECO:0000250" key="1">
    <source>
        <dbReference type="UniProtKB" id="Q9P0I2"/>
    </source>
</evidence>
<evidence type="ECO:0000255" key="2"/>
<evidence type="ECO:0000269" key="3">
    <source>
    </source>
</evidence>
<evidence type="ECO:0000269" key="4">
    <source>
    </source>
</evidence>
<evidence type="ECO:0000305" key="5"/>
<evidence type="ECO:0000305" key="6">
    <source>
    </source>
</evidence>
<evidence type="ECO:0007829" key="7">
    <source>
        <dbReference type="PDB" id="6WB9"/>
    </source>
</evidence>
<evidence type="ECO:0007829" key="8">
    <source>
        <dbReference type="PDB" id="7KRA"/>
    </source>
</evidence>
<proteinExistence type="evidence at protein level"/>
<accession>P36039</accession>
<accession>D6VWZ6</accession>
<accession>Q86ZT1</accession>
<keyword id="KW-0002">3D-structure</keyword>
<keyword id="KW-0256">Endoplasmic reticulum</keyword>
<keyword id="KW-0472">Membrane</keyword>
<keyword id="KW-1185">Reference proteome</keyword>
<keyword id="KW-0812">Transmembrane</keyword>
<keyword id="KW-1133">Transmembrane helix</keyword>
<name>EMC3_YEAST</name>
<sequence length="253" mass="28352">MLLDDQLKYWVLLPISIVMVLTGVLKQYIMTLITGSSANEAQPRVKLTEWQYLQWAQLLIGNGGNLSSDAFAAKKEFLVKDLTEERHLAKAKQQDGSQAGEVPNPFNDPSMSNAMMNMAKGNMASFIPQTIIMWWVNHFFAGFILMQLPFPLTAKFKEMLQTGIICQDLDVRWVSSISWYFISVLGLNPVYNLIGLNDQDMGIQAGIGGPQGPQGPPQSQVDKAMHAMANDLTIIQHETCLDNVEQRVLKQYM</sequence>
<feature type="chain" id="PRO_0000211411" description="ER membrane protein complex subunit 3">
    <location>
        <begin position="1"/>
        <end position="253"/>
    </location>
</feature>
<feature type="transmembrane region" description="Helical" evidence="2">
    <location>
        <begin position="10"/>
        <end position="30"/>
    </location>
</feature>
<feature type="transmembrane region" description="Helical" evidence="2">
    <location>
        <begin position="126"/>
        <end position="146"/>
    </location>
</feature>
<feature type="transmembrane region" description="Helical" evidence="2">
    <location>
        <begin position="176"/>
        <end position="196"/>
    </location>
</feature>
<feature type="helix" evidence="7">
    <location>
        <begin position="5"/>
        <end position="33"/>
    </location>
</feature>
<feature type="helix" evidence="7">
    <location>
        <begin position="44"/>
        <end position="62"/>
    </location>
</feature>
<feature type="helix" evidence="7">
    <location>
        <begin position="63"/>
        <end position="65"/>
    </location>
</feature>
<feature type="helix" evidence="7">
    <location>
        <begin position="68"/>
        <end position="83"/>
    </location>
</feature>
<feature type="turn" evidence="7">
    <location>
        <begin position="123"/>
        <end position="125"/>
    </location>
</feature>
<feature type="helix" evidence="7">
    <location>
        <begin position="126"/>
        <end position="139"/>
    </location>
</feature>
<feature type="helix" evidence="7">
    <location>
        <begin position="154"/>
        <end position="156"/>
    </location>
</feature>
<feature type="helix" evidence="7">
    <location>
        <begin position="157"/>
        <end position="160"/>
    </location>
</feature>
<feature type="strand" evidence="8">
    <location>
        <begin position="167"/>
        <end position="169"/>
    </location>
</feature>
<feature type="strand" evidence="8">
    <location>
        <begin position="171"/>
        <end position="174"/>
    </location>
</feature>
<feature type="helix" evidence="7">
    <location>
        <begin position="176"/>
        <end position="193"/>
    </location>
</feature>
<feature type="helix" evidence="7">
    <location>
        <begin position="222"/>
        <end position="233"/>
    </location>
</feature>
<feature type="strand" evidence="8">
    <location>
        <begin position="241"/>
        <end position="243"/>
    </location>
</feature>
<feature type="helix" evidence="7">
    <location>
        <begin position="244"/>
        <end position="251"/>
    </location>
</feature>